<proteinExistence type="inferred from homology"/>
<reference key="1">
    <citation type="journal article" date="1999" name="Nature">
        <title>Sequence and analysis of chromosome 2 of the plant Arabidopsis thaliana.</title>
        <authorList>
            <person name="Lin X."/>
            <person name="Kaul S."/>
            <person name="Rounsley S.D."/>
            <person name="Shea T.P."/>
            <person name="Benito M.-I."/>
            <person name="Town C.D."/>
            <person name="Fujii C.Y."/>
            <person name="Mason T.M."/>
            <person name="Bowman C.L."/>
            <person name="Barnstead M.E."/>
            <person name="Feldblyum T.V."/>
            <person name="Buell C.R."/>
            <person name="Ketchum K.A."/>
            <person name="Lee J.J."/>
            <person name="Ronning C.M."/>
            <person name="Koo H.L."/>
            <person name="Moffat K.S."/>
            <person name="Cronin L.A."/>
            <person name="Shen M."/>
            <person name="Pai G."/>
            <person name="Van Aken S."/>
            <person name="Umayam L."/>
            <person name="Tallon L.J."/>
            <person name="Gill J.E."/>
            <person name="Adams M.D."/>
            <person name="Carrera A.J."/>
            <person name="Creasy T.H."/>
            <person name="Goodman H.M."/>
            <person name="Somerville C.R."/>
            <person name="Copenhaver G.P."/>
            <person name="Preuss D."/>
            <person name="Nierman W.C."/>
            <person name="White O."/>
            <person name="Eisen J.A."/>
            <person name="Salzberg S.L."/>
            <person name="Fraser C.M."/>
            <person name="Venter J.C."/>
        </authorList>
    </citation>
    <scope>NUCLEOTIDE SEQUENCE [LARGE SCALE GENOMIC DNA]</scope>
    <source>
        <strain>cv. Columbia</strain>
    </source>
</reference>
<reference key="2">
    <citation type="journal article" date="2017" name="Plant J.">
        <title>Araport11: a complete reannotation of the Arabidopsis thaliana reference genome.</title>
        <authorList>
            <person name="Cheng C.Y."/>
            <person name="Krishnakumar V."/>
            <person name="Chan A.P."/>
            <person name="Thibaud-Nissen F."/>
            <person name="Schobel S."/>
            <person name="Town C.D."/>
        </authorList>
    </citation>
    <scope>GENOME REANNOTATION</scope>
    <source>
        <strain>cv. Columbia</strain>
    </source>
</reference>
<reference key="3">
    <citation type="journal article" date="2002" name="In Silico Biol.">
        <title>Peptomics, identification of novel cationic Arabidopsis peptides with conserved sequence motifs.</title>
        <authorList>
            <person name="Olsen A.N."/>
            <person name="Mundy J."/>
            <person name="Skriver K."/>
        </authorList>
    </citation>
    <scope>GENE FAMILY</scope>
    <scope>NOMENCLATURE</scope>
</reference>
<evidence type="ECO:0000250" key="1"/>
<evidence type="ECO:0000255" key="2"/>
<evidence type="ECO:0000305" key="3"/>
<keyword id="KW-1015">Disulfide bond</keyword>
<keyword id="KW-0372">Hormone</keyword>
<keyword id="KW-1185">Reference proteome</keyword>
<keyword id="KW-0964">Secreted</keyword>
<keyword id="KW-0732">Signal</keyword>
<organism>
    <name type="scientific">Arabidopsis thaliana</name>
    <name type="common">Mouse-ear cress</name>
    <dbReference type="NCBI Taxonomy" id="3702"/>
    <lineage>
        <taxon>Eukaryota</taxon>
        <taxon>Viridiplantae</taxon>
        <taxon>Streptophyta</taxon>
        <taxon>Embryophyta</taxon>
        <taxon>Tracheophyta</taxon>
        <taxon>Spermatophyta</taxon>
        <taxon>Magnoliopsida</taxon>
        <taxon>eudicotyledons</taxon>
        <taxon>Gunneridae</taxon>
        <taxon>Pentapetalae</taxon>
        <taxon>rosids</taxon>
        <taxon>malvids</taxon>
        <taxon>Brassicales</taxon>
        <taxon>Brassicaceae</taxon>
        <taxon>Camelineae</taxon>
        <taxon>Arabidopsis</taxon>
    </lineage>
</organism>
<dbReference type="EMBL" id="AC004238">
    <property type="status" value="NOT_ANNOTATED_CDS"/>
    <property type="molecule type" value="Genomic_DNA"/>
</dbReference>
<dbReference type="EMBL" id="CP002685">
    <property type="protein sequence ID" value="AEC09026.1"/>
    <property type="molecule type" value="Genomic_DNA"/>
</dbReference>
<dbReference type="RefSeq" id="NP_001318355.1">
    <property type="nucleotide sequence ID" value="NM_001336529.1"/>
</dbReference>
<dbReference type="SMR" id="A8MQL7"/>
<dbReference type="PaxDb" id="3702-AT2G34825.1"/>
<dbReference type="ProteomicsDB" id="228005"/>
<dbReference type="EnsemblPlants" id="AT2G34825.1">
    <property type="protein sequence ID" value="AT2G34825.1"/>
    <property type="gene ID" value="AT2G34825"/>
</dbReference>
<dbReference type="GeneID" id="28718326"/>
<dbReference type="Gramene" id="AT2G34825.1">
    <property type="protein sequence ID" value="AT2G34825.1"/>
    <property type="gene ID" value="AT2G34825"/>
</dbReference>
<dbReference type="KEGG" id="ath:AT2G34825"/>
<dbReference type="Araport" id="AT2G34825"/>
<dbReference type="TAIR" id="AT2G34825">
    <property type="gene designation" value="RALFL20"/>
</dbReference>
<dbReference type="eggNOG" id="ENOG502T1XS">
    <property type="taxonomic scope" value="Eukaryota"/>
</dbReference>
<dbReference type="HOGENOM" id="CLU_2815974_0_0_1"/>
<dbReference type="InParanoid" id="A8MQL7"/>
<dbReference type="OMA" id="AMREDEP"/>
<dbReference type="PhylomeDB" id="A8MQL7"/>
<dbReference type="PRO" id="PR:A8MQL7"/>
<dbReference type="Proteomes" id="UP000006548">
    <property type="component" value="Chromosome 2"/>
</dbReference>
<dbReference type="ExpressionAtlas" id="A8MQL7">
    <property type="expression patterns" value="baseline"/>
</dbReference>
<dbReference type="GO" id="GO:0048046">
    <property type="term" value="C:apoplast"/>
    <property type="evidence" value="ECO:0000250"/>
    <property type="project" value="TAIR"/>
</dbReference>
<dbReference type="GO" id="GO:0005179">
    <property type="term" value="F:hormone activity"/>
    <property type="evidence" value="ECO:0000250"/>
    <property type="project" value="UniProtKB"/>
</dbReference>
<dbReference type="GO" id="GO:0019722">
    <property type="term" value="P:calcium-mediated signaling"/>
    <property type="evidence" value="ECO:0000250"/>
    <property type="project" value="UniProtKB"/>
</dbReference>
<dbReference type="GO" id="GO:0007267">
    <property type="term" value="P:cell-cell signaling"/>
    <property type="evidence" value="ECO:0000250"/>
    <property type="project" value="TAIR"/>
</dbReference>
<dbReference type="GO" id="GO:0040008">
    <property type="term" value="P:regulation of growth"/>
    <property type="evidence" value="ECO:0007669"/>
    <property type="project" value="UniProtKB-ARBA"/>
</dbReference>
<dbReference type="InterPro" id="IPR008801">
    <property type="entry name" value="RALF"/>
</dbReference>
<dbReference type="PANTHER" id="PTHR34270">
    <property type="entry name" value="PROTEIN RALF-LIKE 15-RELATED"/>
    <property type="match status" value="1"/>
</dbReference>
<dbReference type="PANTHER" id="PTHR34270:SF3">
    <property type="entry name" value="PROTEIN RALF-LIKE 16-RELATED"/>
    <property type="match status" value="1"/>
</dbReference>
<dbReference type="Pfam" id="PF05498">
    <property type="entry name" value="RALF"/>
    <property type="match status" value="1"/>
</dbReference>
<sequence>MVLSKKTIMQSFALMIILSIVMSTTEAKTIGNPAMREDEPKGCPPGSPASCKMQPANPYKPGCEASQRCRGT</sequence>
<accession>A8MQL7</accession>
<name>RLF20_ARATH</name>
<protein>
    <recommendedName>
        <fullName>Protein RALF-like 20</fullName>
    </recommendedName>
</protein>
<feature type="signal peptide" evidence="2">
    <location>
        <begin position="1"/>
        <end position="27"/>
    </location>
</feature>
<feature type="chain" id="PRO_0000420314" description="Protein RALF-like 20">
    <location>
        <begin position="28"/>
        <end position="72"/>
    </location>
</feature>
<feature type="disulfide bond" evidence="1">
    <location>
        <begin position="43"/>
        <end position="51"/>
    </location>
</feature>
<feature type="disulfide bond" evidence="1">
    <location>
        <begin position="63"/>
        <end position="69"/>
    </location>
</feature>
<comment type="function">
    <text evidence="1">Cell signaling peptide that may regulate plant stress, growth, and development. Mediates a rapid alkalinization of extracellular space by mediating a transient increase in the cytoplasmic Ca(2+) concentration leading to a calcium-dependent signaling events through a cell surface receptor and a concomitant activation of some intracellular mitogen-activated protein kinases (By similarity).</text>
</comment>
<comment type="subcellular location">
    <subcellularLocation>
        <location evidence="1">Secreted</location>
    </subcellularLocation>
</comment>
<comment type="similarity">
    <text evidence="3">Belongs to the plant rapid alkalinization factor (RALF) family.</text>
</comment>
<gene>
    <name type="primary">RALFL20</name>
    <name type="ordered locus">At2g34825</name>
    <name type="ORF">F19I3</name>
</gene>